<feature type="chain" id="PRO_1000099619" description="Lipoyl synthase">
    <location>
        <begin position="1"/>
        <end position="319"/>
    </location>
</feature>
<feature type="domain" description="Radical SAM core" evidence="2">
    <location>
        <begin position="70"/>
        <end position="287"/>
    </location>
</feature>
<feature type="region of interest" description="Disordered" evidence="3">
    <location>
        <begin position="1"/>
        <end position="24"/>
    </location>
</feature>
<feature type="compositionally biased region" description="Basic and acidic residues" evidence="3">
    <location>
        <begin position="13"/>
        <end position="24"/>
    </location>
</feature>
<feature type="binding site" evidence="1">
    <location>
        <position position="58"/>
    </location>
    <ligand>
        <name>[4Fe-4S] cluster</name>
        <dbReference type="ChEBI" id="CHEBI:49883"/>
        <label>1</label>
    </ligand>
</feature>
<feature type="binding site" evidence="1">
    <location>
        <position position="63"/>
    </location>
    <ligand>
        <name>[4Fe-4S] cluster</name>
        <dbReference type="ChEBI" id="CHEBI:49883"/>
        <label>1</label>
    </ligand>
</feature>
<feature type="binding site" evidence="1">
    <location>
        <position position="69"/>
    </location>
    <ligand>
        <name>[4Fe-4S] cluster</name>
        <dbReference type="ChEBI" id="CHEBI:49883"/>
        <label>1</label>
    </ligand>
</feature>
<feature type="binding site" evidence="1">
    <location>
        <position position="84"/>
    </location>
    <ligand>
        <name>[4Fe-4S] cluster</name>
        <dbReference type="ChEBI" id="CHEBI:49883"/>
        <label>2</label>
        <note>4Fe-4S-S-AdoMet</note>
    </ligand>
</feature>
<feature type="binding site" evidence="1">
    <location>
        <position position="88"/>
    </location>
    <ligand>
        <name>[4Fe-4S] cluster</name>
        <dbReference type="ChEBI" id="CHEBI:49883"/>
        <label>2</label>
        <note>4Fe-4S-S-AdoMet</note>
    </ligand>
</feature>
<feature type="binding site" evidence="1">
    <location>
        <position position="91"/>
    </location>
    <ligand>
        <name>[4Fe-4S] cluster</name>
        <dbReference type="ChEBI" id="CHEBI:49883"/>
        <label>2</label>
        <note>4Fe-4S-S-AdoMet</note>
    </ligand>
</feature>
<feature type="binding site" evidence="1">
    <location>
        <position position="298"/>
    </location>
    <ligand>
        <name>[4Fe-4S] cluster</name>
        <dbReference type="ChEBI" id="CHEBI:49883"/>
        <label>1</label>
    </ligand>
</feature>
<organism>
    <name type="scientific">Phenylobacterium zucineum (strain HLK1)</name>
    <dbReference type="NCBI Taxonomy" id="450851"/>
    <lineage>
        <taxon>Bacteria</taxon>
        <taxon>Pseudomonadati</taxon>
        <taxon>Pseudomonadota</taxon>
        <taxon>Alphaproteobacteria</taxon>
        <taxon>Caulobacterales</taxon>
        <taxon>Caulobacteraceae</taxon>
        <taxon>Phenylobacterium</taxon>
    </lineage>
</organism>
<keyword id="KW-0004">4Fe-4S</keyword>
<keyword id="KW-0963">Cytoplasm</keyword>
<keyword id="KW-0408">Iron</keyword>
<keyword id="KW-0411">Iron-sulfur</keyword>
<keyword id="KW-0479">Metal-binding</keyword>
<keyword id="KW-1185">Reference proteome</keyword>
<keyword id="KW-0949">S-adenosyl-L-methionine</keyword>
<keyword id="KW-0808">Transferase</keyword>
<proteinExistence type="inferred from homology"/>
<dbReference type="EC" id="2.8.1.8" evidence="1"/>
<dbReference type="EMBL" id="CP000747">
    <property type="protein sequence ID" value="ACG78148.1"/>
    <property type="molecule type" value="Genomic_DNA"/>
</dbReference>
<dbReference type="RefSeq" id="WP_012522290.1">
    <property type="nucleotide sequence ID" value="NC_011144.1"/>
</dbReference>
<dbReference type="SMR" id="B4RBV1"/>
<dbReference type="STRING" id="450851.PHZ_c1737"/>
<dbReference type="KEGG" id="pzu:PHZ_c1737"/>
<dbReference type="eggNOG" id="COG0320">
    <property type="taxonomic scope" value="Bacteria"/>
</dbReference>
<dbReference type="HOGENOM" id="CLU_033144_2_1_5"/>
<dbReference type="OrthoDB" id="9787898at2"/>
<dbReference type="UniPathway" id="UPA00538">
    <property type="reaction ID" value="UER00593"/>
</dbReference>
<dbReference type="Proteomes" id="UP000001868">
    <property type="component" value="Chromosome"/>
</dbReference>
<dbReference type="GO" id="GO:0005737">
    <property type="term" value="C:cytoplasm"/>
    <property type="evidence" value="ECO:0007669"/>
    <property type="project" value="UniProtKB-SubCell"/>
</dbReference>
<dbReference type="GO" id="GO:0051539">
    <property type="term" value="F:4 iron, 4 sulfur cluster binding"/>
    <property type="evidence" value="ECO:0007669"/>
    <property type="project" value="UniProtKB-UniRule"/>
</dbReference>
<dbReference type="GO" id="GO:0016992">
    <property type="term" value="F:lipoate synthase activity"/>
    <property type="evidence" value="ECO:0007669"/>
    <property type="project" value="UniProtKB-UniRule"/>
</dbReference>
<dbReference type="GO" id="GO:0046872">
    <property type="term" value="F:metal ion binding"/>
    <property type="evidence" value="ECO:0007669"/>
    <property type="project" value="UniProtKB-KW"/>
</dbReference>
<dbReference type="CDD" id="cd01335">
    <property type="entry name" value="Radical_SAM"/>
    <property type="match status" value="1"/>
</dbReference>
<dbReference type="FunFam" id="3.20.20.70:FF:000040">
    <property type="entry name" value="Lipoyl synthase"/>
    <property type="match status" value="1"/>
</dbReference>
<dbReference type="Gene3D" id="3.20.20.70">
    <property type="entry name" value="Aldolase class I"/>
    <property type="match status" value="1"/>
</dbReference>
<dbReference type="HAMAP" id="MF_00206">
    <property type="entry name" value="Lipoyl_synth"/>
    <property type="match status" value="1"/>
</dbReference>
<dbReference type="InterPro" id="IPR013785">
    <property type="entry name" value="Aldolase_TIM"/>
</dbReference>
<dbReference type="InterPro" id="IPR006638">
    <property type="entry name" value="Elp3/MiaA/NifB-like_rSAM"/>
</dbReference>
<dbReference type="InterPro" id="IPR003698">
    <property type="entry name" value="Lipoyl_synth"/>
</dbReference>
<dbReference type="InterPro" id="IPR007197">
    <property type="entry name" value="rSAM"/>
</dbReference>
<dbReference type="NCBIfam" id="TIGR00510">
    <property type="entry name" value="lipA"/>
    <property type="match status" value="1"/>
</dbReference>
<dbReference type="NCBIfam" id="NF004019">
    <property type="entry name" value="PRK05481.1"/>
    <property type="match status" value="1"/>
</dbReference>
<dbReference type="NCBIfam" id="NF009544">
    <property type="entry name" value="PRK12928.1"/>
    <property type="match status" value="1"/>
</dbReference>
<dbReference type="PANTHER" id="PTHR10949">
    <property type="entry name" value="LIPOYL SYNTHASE"/>
    <property type="match status" value="1"/>
</dbReference>
<dbReference type="PANTHER" id="PTHR10949:SF0">
    <property type="entry name" value="LIPOYL SYNTHASE, MITOCHONDRIAL"/>
    <property type="match status" value="1"/>
</dbReference>
<dbReference type="Pfam" id="PF04055">
    <property type="entry name" value="Radical_SAM"/>
    <property type="match status" value="1"/>
</dbReference>
<dbReference type="PIRSF" id="PIRSF005963">
    <property type="entry name" value="Lipoyl_synth"/>
    <property type="match status" value="1"/>
</dbReference>
<dbReference type="SFLD" id="SFLDF00271">
    <property type="entry name" value="lipoyl_synthase"/>
    <property type="match status" value="1"/>
</dbReference>
<dbReference type="SFLD" id="SFLDG01058">
    <property type="entry name" value="lipoyl_synthase_like"/>
    <property type="match status" value="1"/>
</dbReference>
<dbReference type="SMART" id="SM00729">
    <property type="entry name" value="Elp3"/>
    <property type="match status" value="1"/>
</dbReference>
<dbReference type="SUPFAM" id="SSF102114">
    <property type="entry name" value="Radical SAM enzymes"/>
    <property type="match status" value="1"/>
</dbReference>
<dbReference type="PROSITE" id="PS51918">
    <property type="entry name" value="RADICAL_SAM"/>
    <property type="match status" value="1"/>
</dbReference>
<accession>B4RBV1</accession>
<comment type="function">
    <text evidence="1">Catalyzes the radical-mediated insertion of two sulfur atoms into the C-6 and C-8 positions of the octanoyl moiety bound to the lipoyl domains of lipoate-dependent enzymes, thereby converting the octanoylated domains into lipoylated derivatives.</text>
</comment>
<comment type="catalytic activity">
    <reaction evidence="1">
        <text>[[Fe-S] cluster scaffold protein carrying a second [4Fe-4S](2+) cluster] + N(6)-octanoyl-L-lysyl-[protein] + 2 oxidized [2Fe-2S]-[ferredoxin] + 2 S-adenosyl-L-methionine + 4 H(+) = [[Fe-S] cluster scaffold protein] + N(6)-[(R)-dihydrolipoyl]-L-lysyl-[protein] + 4 Fe(3+) + 2 hydrogen sulfide + 2 5'-deoxyadenosine + 2 L-methionine + 2 reduced [2Fe-2S]-[ferredoxin]</text>
        <dbReference type="Rhea" id="RHEA:16585"/>
        <dbReference type="Rhea" id="RHEA-COMP:9928"/>
        <dbReference type="Rhea" id="RHEA-COMP:10000"/>
        <dbReference type="Rhea" id="RHEA-COMP:10001"/>
        <dbReference type="Rhea" id="RHEA-COMP:10475"/>
        <dbReference type="Rhea" id="RHEA-COMP:14568"/>
        <dbReference type="Rhea" id="RHEA-COMP:14569"/>
        <dbReference type="ChEBI" id="CHEBI:15378"/>
        <dbReference type="ChEBI" id="CHEBI:17319"/>
        <dbReference type="ChEBI" id="CHEBI:29034"/>
        <dbReference type="ChEBI" id="CHEBI:29919"/>
        <dbReference type="ChEBI" id="CHEBI:33722"/>
        <dbReference type="ChEBI" id="CHEBI:33737"/>
        <dbReference type="ChEBI" id="CHEBI:33738"/>
        <dbReference type="ChEBI" id="CHEBI:57844"/>
        <dbReference type="ChEBI" id="CHEBI:59789"/>
        <dbReference type="ChEBI" id="CHEBI:78809"/>
        <dbReference type="ChEBI" id="CHEBI:83100"/>
        <dbReference type="EC" id="2.8.1.8"/>
    </reaction>
</comment>
<comment type="cofactor">
    <cofactor evidence="1">
        <name>[4Fe-4S] cluster</name>
        <dbReference type="ChEBI" id="CHEBI:49883"/>
    </cofactor>
    <text evidence="1">Binds 2 [4Fe-4S] clusters per subunit. One cluster is coordinated with 3 cysteines and an exchangeable S-adenosyl-L-methionine.</text>
</comment>
<comment type="pathway">
    <text evidence="1">Protein modification; protein lipoylation via endogenous pathway; protein N(6)-(lipoyl)lysine from octanoyl-[acyl-carrier-protein]: step 2/2.</text>
</comment>
<comment type="subcellular location">
    <subcellularLocation>
        <location evidence="1">Cytoplasm</location>
    </subcellularLocation>
</comment>
<comment type="similarity">
    <text evidence="1">Belongs to the radical SAM superfamily. Lipoyl synthase family.</text>
</comment>
<name>LIPA_PHEZH</name>
<reference key="1">
    <citation type="journal article" date="2008" name="BMC Genomics">
        <title>Complete genome of Phenylobacterium zucineum - a novel facultative intracellular bacterium isolated from human erythroleukemia cell line K562.</title>
        <authorList>
            <person name="Luo Y."/>
            <person name="Xu X."/>
            <person name="Ding Z."/>
            <person name="Liu Z."/>
            <person name="Zhang B."/>
            <person name="Yan Z."/>
            <person name="Sun J."/>
            <person name="Hu S."/>
            <person name="Hu X."/>
        </authorList>
    </citation>
    <scope>NUCLEOTIDE SEQUENCE [LARGE SCALE GENOMIC DNA]</scope>
    <source>
        <strain>HLK1</strain>
    </source>
</reference>
<sequence length="319" mass="35207">MAVVIDTVGARPRHPEKQANPDTPVLRKPEWLRVRAPGSANYMATREVVKSNRLVTVCEEAGCPNIGECWDKSHATFMIMGEVCTRACAFCNVATGKPLALDPDEPARVGEATAKMGLKHVVVTSVDRDDLADGGAWHFVETIRAIRAASPATTIEILTPDFARKPVAALESVIDARPDVFNHNLETVPRLYLSIRPGARYYHSLRLLERVKERDPTQFTKSGIMVGLGESKEEVMQVMDDMRSAGVDFITIGQYLQPTRKHAPIDRFVHPDEFRALEEIARAKGFLMVSASPLTRSSHHAGEDFARLQAARLAKESAA</sequence>
<gene>
    <name evidence="1" type="primary">lipA</name>
    <name type="ordered locus">PHZ_c1737</name>
</gene>
<protein>
    <recommendedName>
        <fullName evidence="1">Lipoyl synthase</fullName>
        <ecNumber evidence="1">2.8.1.8</ecNumber>
    </recommendedName>
    <alternativeName>
        <fullName evidence="1">Lip-syn</fullName>
        <shortName evidence="1">LS</shortName>
    </alternativeName>
    <alternativeName>
        <fullName evidence="1">Lipoate synthase</fullName>
    </alternativeName>
    <alternativeName>
        <fullName evidence="1">Lipoic acid synthase</fullName>
    </alternativeName>
    <alternativeName>
        <fullName evidence="1">Sulfur insertion protein LipA</fullName>
    </alternativeName>
</protein>
<evidence type="ECO:0000255" key="1">
    <source>
        <dbReference type="HAMAP-Rule" id="MF_00206"/>
    </source>
</evidence>
<evidence type="ECO:0000255" key="2">
    <source>
        <dbReference type="PROSITE-ProRule" id="PRU01266"/>
    </source>
</evidence>
<evidence type="ECO:0000256" key="3">
    <source>
        <dbReference type="SAM" id="MobiDB-lite"/>
    </source>
</evidence>